<reference key="1">
    <citation type="journal article" date="1986" name="J. Virol.">
        <title>Nucleotide sequence of human endogenous retrovirus genome related to the mouse mammary tumor virus genome.</title>
        <authorList>
            <person name="Ono M."/>
            <person name="Yasunaga T."/>
            <person name="Miyata T."/>
            <person name="Ushikubo H."/>
        </authorList>
    </citation>
    <scope>NUCLEOTIDE SEQUENCE [GENOMIC DNA]</scope>
</reference>
<reference key="2">
    <citation type="journal article" date="1999" name="Curr. Biol.">
        <title>Many human endogenous retrovirus K (HERV-K) proviruses are unique to humans.</title>
        <authorList>
            <person name="Barbulescu M."/>
            <person name="Turner G."/>
            <person name="Seaman M.I."/>
            <person name="Deinard A.S."/>
            <person name="Kidd K.K."/>
            <person name="Lenz J."/>
        </authorList>
    </citation>
    <scope>NUCLEOTIDE SEQUENCE [GENOMIC DNA]</scope>
</reference>
<reference key="3">
    <citation type="journal article" date="2004" name="Nature">
        <title>The DNA sequence and comparative analysis of human chromosome 5.</title>
        <authorList>
            <person name="Schmutz J."/>
            <person name="Martin J."/>
            <person name="Terry A."/>
            <person name="Couronne O."/>
            <person name="Grimwood J."/>
            <person name="Lowry S."/>
            <person name="Gordon L.A."/>
            <person name="Scott D."/>
            <person name="Xie G."/>
            <person name="Huang W."/>
            <person name="Hellsten U."/>
            <person name="Tran-Gyamfi M."/>
            <person name="She X."/>
            <person name="Prabhakar S."/>
            <person name="Aerts A."/>
            <person name="Altherr M."/>
            <person name="Bajorek E."/>
            <person name="Black S."/>
            <person name="Branscomb E."/>
            <person name="Caoile C."/>
            <person name="Challacombe J.F."/>
            <person name="Chan Y.M."/>
            <person name="Denys M."/>
            <person name="Detter J.C."/>
            <person name="Escobar J."/>
            <person name="Flowers D."/>
            <person name="Fotopulos D."/>
            <person name="Glavina T."/>
            <person name="Gomez M."/>
            <person name="Gonzales E."/>
            <person name="Goodstein D."/>
            <person name="Grigoriev I."/>
            <person name="Groza M."/>
            <person name="Hammon N."/>
            <person name="Hawkins T."/>
            <person name="Haydu L."/>
            <person name="Israni S."/>
            <person name="Jett J."/>
            <person name="Kadner K."/>
            <person name="Kimball H."/>
            <person name="Kobayashi A."/>
            <person name="Lopez F."/>
            <person name="Lou Y."/>
            <person name="Martinez D."/>
            <person name="Medina C."/>
            <person name="Morgan J."/>
            <person name="Nandkeshwar R."/>
            <person name="Noonan J.P."/>
            <person name="Pitluck S."/>
            <person name="Pollard M."/>
            <person name="Predki P."/>
            <person name="Priest J."/>
            <person name="Ramirez L."/>
            <person name="Retterer J."/>
            <person name="Rodriguez A."/>
            <person name="Rogers S."/>
            <person name="Salamov A."/>
            <person name="Salazar A."/>
            <person name="Thayer N."/>
            <person name="Tice H."/>
            <person name="Tsai M."/>
            <person name="Ustaszewska A."/>
            <person name="Vo N."/>
            <person name="Wheeler J."/>
            <person name="Wu K."/>
            <person name="Yang J."/>
            <person name="Dickson M."/>
            <person name="Cheng J.-F."/>
            <person name="Eichler E.E."/>
            <person name="Olsen A."/>
            <person name="Pennacchio L.A."/>
            <person name="Rokhsar D.S."/>
            <person name="Richardson P."/>
            <person name="Lucas S.M."/>
            <person name="Myers R.M."/>
            <person name="Rubin E.M."/>
        </authorList>
    </citation>
    <scope>NUCLEOTIDE SEQUENCE [LARGE SCALE GENOMIC DNA]</scope>
</reference>
<reference key="4">
    <citation type="journal article" date="1996" name="J. Gen. Virol.">
        <title>Characterization of the human endogenous retrovirus K proteinase.</title>
        <authorList>
            <person name="Schommer S."/>
            <person name="Sauter M."/>
            <person name="Krausslich H.G."/>
            <person name="Best B."/>
            <person name="Mueller-Lantzsch N."/>
        </authorList>
    </citation>
    <scope>CHARACTERIZATION</scope>
</reference>
<reference key="5">
    <citation type="journal article" date="1998" name="Biochemistry">
        <title>Functional characterization of the protease of human endogenous retrovirus, K10: can it complement HIV-1 protease?</title>
        <authorList>
            <person name="Towler E.M."/>
            <person name="Gulnik S.V."/>
            <person name="Bhat T.N."/>
            <person name="Xie D."/>
            <person name="Gustschina E."/>
            <person name="Sumpter T.R."/>
            <person name="Robertson N."/>
            <person name="Jones C."/>
            <person name="Sauter M."/>
            <person name="Mueller-Lantzsch N."/>
            <person name="Debouck C."/>
            <person name="Erickson J.W."/>
        </authorList>
    </citation>
    <scope>CHARACTERIZATION</scope>
    <scope>CATALYTIC ACTIVITY</scope>
    <scope>MUTAGENESIS OF ASP-26</scope>
    <scope>PROTEIN SEQUENCE OF N-TERMINUS</scope>
    <scope>MASS SPECTROMETRY</scope>
</reference>
<reference key="6">
    <citation type="journal article" date="2001" name="J. Biol. Chem.">
        <title>Inhibition of human endogenous retrovirus-K10 protease in cell-free and cell-based assays.</title>
        <authorList>
            <person name="Kuhelj R."/>
            <person name="Rizzo C.J."/>
            <person name="Chang C.H."/>
            <person name="Jadhav P.K."/>
            <person name="Towler E.M."/>
            <person name="Korant B.D."/>
        </authorList>
    </citation>
    <scope>CHARACTERIZATION</scope>
    <scope>CATALYTIC ACTIVITY</scope>
    <scope>MUTAGENESIS OF ASP-26</scope>
    <scope>PROTEIN SEQUENCE OF N-TERMINUS</scope>
    <scope>IDENTIFICATION BY MASS SPECTROMETRY</scope>
</reference>
<dbReference type="EC" id="3.4.23.50"/>
<dbReference type="EMBL" id="M14123">
    <property type="protein sequence ID" value="AAA88032.1"/>
    <property type="status" value="ALT_INIT"/>
    <property type="molecule type" value="Genomic_DNA"/>
</dbReference>
<dbReference type="EMBL" id="AF164613">
    <property type="protein sequence ID" value="AAD51796.1"/>
    <property type="status" value="ALT_SEQ"/>
    <property type="molecule type" value="Genomic_DNA"/>
</dbReference>
<dbReference type="EMBL" id="AC016577">
    <property type="status" value="NOT_ANNOTATED_CDS"/>
    <property type="molecule type" value="Genomic_DNA"/>
</dbReference>
<dbReference type="PIR" id="C24483">
    <property type="entry name" value="PRHUER"/>
</dbReference>
<dbReference type="SMR" id="P10265"/>
<dbReference type="MEROPS" id="A02.011"/>
<dbReference type="iPTMnet" id="P10265"/>
<dbReference type="PhosphoSitePlus" id="P10265"/>
<dbReference type="BioMuta" id="HGNC:39004"/>
<dbReference type="DMDM" id="52001472"/>
<dbReference type="PeptideAtlas" id="P10265"/>
<dbReference type="GeneCards" id="ERVK-10"/>
<dbReference type="HGNC" id="HGNC:39004">
    <property type="gene designation" value="ERVK-10"/>
</dbReference>
<dbReference type="neXtProt" id="NX_P10265"/>
<dbReference type="PhylomeDB" id="P10265"/>
<dbReference type="BRENDA" id="3.4.23.50">
    <property type="organism ID" value="2681"/>
</dbReference>
<dbReference type="Pharos" id="P10265">
    <property type="development level" value="Tdark"/>
</dbReference>
<dbReference type="Proteomes" id="UP000005640">
    <property type="component" value="Unplaced"/>
</dbReference>
<dbReference type="GO" id="GO:0004190">
    <property type="term" value="F:aspartic-type endopeptidase activity"/>
    <property type="evidence" value="ECO:0007669"/>
    <property type="project" value="UniProtKB-KW"/>
</dbReference>
<dbReference type="GO" id="GO:0003676">
    <property type="term" value="F:nucleic acid binding"/>
    <property type="evidence" value="ECO:0007669"/>
    <property type="project" value="InterPro"/>
</dbReference>
<dbReference type="GO" id="GO:0006508">
    <property type="term" value="P:proteolysis"/>
    <property type="evidence" value="ECO:0007669"/>
    <property type="project" value="UniProtKB-KW"/>
</dbReference>
<dbReference type="GO" id="GO:0075523">
    <property type="term" value="P:viral translational frameshifting"/>
    <property type="evidence" value="ECO:0007669"/>
    <property type="project" value="UniProtKB-KW"/>
</dbReference>
<dbReference type="CDD" id="cd05482">
    <property type="entry name" value="HIV_retropepsin_like"/>
    <property type="match status" value="1"/>
</dbReference>
<dbReference type="Gene3D" id="2.40.70.10">
    <property type="entry name" value="Acid Proteases"/>
    <property type="match status" value="1"/>
</dbReference>
<dbReference type="InterPro" id="IPR001969">
    <property type="entry name" value="Aspartic_peptidase_AS"/>
</dbReference>
<dbReference type="InterPro" id="IPR000467">
    <property type="entry name" value="G_patch_dom"/>
</dbReference>
<dbReference type="InterPro" id="IPR051592">
    <property type="entry name" value="HERV-K_Pro_peptidase_A2"/>
</dbReference>
<dbReference type="InterPro" id="IPR001995">
    <property type="entry name" value="Peptidase_A2_cat"/>
</dbReference>
<dbReference type="InterPro" id="IPR021109">
    <property type="entry name" value="Peptidase_aspartic_dom_sf"/>
</dbReference>
<dbReference type="InterPro" id="IPR034170">
    <property type="entry name" value="Retropepsin-like_cat_dom"/>
</dbReference>
<dbReference type="InterPro" id="IPR018061">
    <property type="entry name" value="Retropepsins"/>
</dbReference>
<dbReference type="PANTHER" id="PTHR19422">
    <property type="entry name" value="GAG RETROVIRAL POLYPROTEIN"/>
    <property type="match status" value="1"/>
</dbReference>
<dbReference type="PANTHER" id="PTHR19422:SF123">
    <property type="entry name" value="RT1 CLASS I, LOCUS CE15"/>
    <property type="match status" value="1"/>
</dbReference>
<dbReference type="Pfam" id="PF01585">
    <property type="entry name" value="G-patch"/>
    <property type="match status" value="1"/>
</dbReference>
<dbReference type="Pfam" id="PF00077">
    <property type="entry name" value="RVP"/>
    <property type="match status" value="1"/>
</dbReference>
<dbReference type="SMART" id="SM00443">
    <property type="entry name" value="G_patch"/>
    <property type="match status" value="1"/>
</dbReference>
<dbReference type="SUPFAM" id="SSF50630">
    <property type="entry name" value="Acid proteases"/>
    <property type="match status" value="1"/>
</dbReference>
<dbReference type="PROSITE" id="PS50175">
    <property type="entry name" value="ASP_PROT_RETROV"/>
    <property type="match status" value="1"/>
</dbReference>
<dbReference type="PROSITE" id="PS00141">
    <property type="entry name" value="ASP_PROTEASE"/>
    <property type="match status" value="1"/>
</dbReference>
<dbReference type="PROSITE" id="PS50174">
    <property type="entry name" value="G_PATCH"/>
    <property type="match status" value="1"/>
</dbReference>
<comment type="function">
    <text>Retroviral proteases have roles in processing of the primary translation products and the maturation of the viral particle. Endogenous Pro proteins may have kept, lost or modified their original function during evolution. This endogenous protein has retained most of the characteristics of retroviral proteases.</text>
</comment>
<comment type="catalytic activity">
    <reaction evidence="4 5">
        <text>Processing at the authentic HIV-1 PR recognition site and release of the mature p17 matrix and the p24 capsid protein, as a result of the cleavage of the -SQNY-|-PIVQ- cleavage site.</text>
        <dbReference type="EC" id="3.4.23.50"/>
    </reaction>
</comment>
<comment type="activity regulation">
    <text>Resistant to a number of clinically useful HIV-1 PR inhibitors. Inhibited by cyclic urea SD146.</text>
</comment>
<comment type="subunit">
    <text>Active as a homodimer.</text>
</comment>
<comment type="alternative products">
    <event type="ribosomal frameshifting"/>
    <isoform>
        <id>P10265-1</id>
        <name>1</name>
        <sequence type="displayed"/>
    </isoform>
    <text>This protein is synthesized as Gag-Pro and Gag-Pro-Pol polyprotein. These polyproteins are thought, by similarity with type-B retroviruses, to be generated by -1 frameshifts occurring at the Gag-Pro and Pro-Pol genes boundaries.</text>
</comment>
<comment type="PTM">
    <text>Autoproteolytically processed at the N-terminus. Expected C-terminal autoprocessing not detected. The sequence shown is that of the processed Pro protein.</text>
</comment>
<comment type="mass spectrometry">
    <text>Reported mass includes mass of a C-terminal His6 tag, expressed in E.coli.</text>
</comment>
<comment type="similarity">
    <text evidence="6">Belongs to the peptidase A2 family. HERV class-II K(HML-2) subfamily.</text>
</comment>
<comment type="sequence caution" evidence="6">
    <conflict type="erroneous initiation">
        <sequence resource="EMBL-CDS" id="AAA88032"/>
    </conflict>
</comment>
<protein>
    <recommendedName>
        <fullName>Endogenous retrovirus group K member 10 Pro protein</fullName>
    </recommendedName>
    <alternativeName>
        <fullName>HERV-K10 Pro protein</fullName>
    </alternativeName>
    <alternativeName>
        <fullName>HERV-K107 Pro protein</fullName>
    </alternativeName>
    <alternativeName>
        <fullName>HERV-K_5q33.3 provirus ancestral Pro protein</fullName>
        <ecNumber>3.4.23.50</ecNumber>
    </alternativeName>
    <alternativeName>
        <fullName>Protease</fullName>
    </alternativeName>
    <alternativeName>
        <fullName>Proteinase</fullName>
        <shortName>PR</shortName>
    </alternativeName>
</protein>
<organism>
    <name type="scientific">Homo sapiens</name>
    <name type="common">Human</name>
    <dbReference type="NCBI Taxonomy" id="9606"/>
    <lineage>
        <taxon>Eukaryota</taxon>
        <taxon>Metazoa</taxon>
        <taxon>Chordata</taxon>
        <taxon>Craniata</taxon>
        <taxon>Vertebrata</taxon>
        <taxon>Euteleostomi</taxon>
        <taxon>Mammalia</taxon>
        <taxon>Eutheria</taxon>
        <taxon>Euarchontoglires</taxon>
        <taxon>Primates</taxon>
        <taxon>Haplorrhini</taxon>
        <taxon>Catarrhini</taxon>
        <taxon>Hominidae</taxon>
        <taxon>Homo</taxon>
    </lineage>
</organism>
<name>VPK10_HUMAN</name>
<proteinExistence type="evidence at protein level"/>
<sequence>WASQVSENRPVCKAIIQGKQFEGLVDTGADVSIIALNQWPKNWPKQKAVTGLVGIGTASEVYQSMEILHCLGPDNQESTVQPMITSIPLNLWGRDLLQQWGAEITMPAPLYSPTSQKIMTKMGYIPGKGLGKNEDGIKVPVEAKINQEREGIGYPF</sequence>
<gene>
    <name type="primary">ERVK-10</name>
</gene>
<feature type="chain" id="PRO_0000199544" description="Endogenous retrovirus group K member 10 Pro protein">
    <location>
        <begin position="1"/>
        <end position="156"/>
    </location>
</feature>
<feature type="domain" description="Peptidase A2" evidence="2">
    <location>
        <begin position="21"/>
        <end position="96"/>
    </location>
</feature>
<feature type="domain" description="G-patch" evidence="1">
    <location>
        <begin position="111"/>
        <end position="156"/>
    </location>
</feature>
<feature type="active site" evidence="3">
    <location>
        <position position="26"/>
    </location>
</feature>
<feature type="mutagenesis site" description="Loss of activity." evidence="4 5">
    <original>D</original>
    <variation>M</variation>
    <location>
        <position position="26"/>
    </location>
</feature>
<accession>P10265</accession>
<accession>Q9UKH6</accession>
<keyword id="KW-0064">Aspartyl protease</keyword>
<keyword id="KW-0068">Autocatalytic cleavage</keyword>
<keyword id="KW-0903">Direct protein sequencing</keyword>
<keyword id="KW-0895">ERV</keyword>
<keyword id="KW-0378">Hydrolase</keyword>
<keyword id="KW-0645">Protease</keyword>
<keyword id="KW-1185">Reference proteome</keyword>
<keyword id="KW-0688">Ribosomal frameshifting</keyword>
<keyword id="KW-0814">Transposable element</keyword>
<evidence type="ECO:0000255" key="1">
    <source>
        <dbReference type="PROSITE-ProRule" id="PRU00092"/>
    </source>
</evidence>
<evidence type="ECO:0000255" key="2">
    <source>
        <dbReference type="PROSITE-ProRule" id="PRU00275"/>
    </source>
</evidence>
<evidence type="ECO:0000255" key="3">
    <source>
        <dbReference type="PROSITE-ProRule" id="PRU10094"/>
    </source>
</evidence>
<evidence type="ECO:0000269" key="4">
    <source>
    </source>
</evidence>
<evidence type="ECO:0000269" key="5">
    <source>
    </source>
</evidence>
<evidence type="ECO:0000305" key="6"/>